<evidence type="ECO:0000250" key="1">
    <source>
        <dbReference type="UniProtKB" id="P25586"/>
    </source>
</evidence>
<evidence type="ECO:0000255" key="2"/>
<evidence type="ECO:0000256" key="3">
    <source>
        <dbReference type="SAM" id="MobiDB-lite"/>
    </source>
</evidence>
<evidence type="ECO:0000312" key="4">
    <source>
        <dbReference type="EMBL" id="EDZ73592.1"/>
    </source>
</evidence>
<organism>
    <name type="scientific">Saccharomyces cerevisiae (strain AWRI1631)</name>
    <name type="common">Baker's yeast</name>
    <dbReference type="NCBI Taxonomy" id="545124"/>
    <lineage>
        <taxon>Eukaryota</taxon>
        <taxon>Fungi</taxon>
        <taxon>Dikarya</taxon>
        <taxon>Ascomycota</taxon>
        <taxon>Saccharomycotina</taxon>
        <taxon>Saccharomycetes</taxon>
        <taxon>Saccharomycetales</taxon>
        <taxon>Saccharomycetaceae</taxon>
        <taxon>Saccharomyces</taxon>
    </lineage>
</organism>
<name>KRR1_YEAS6</name>
<proteinExistence type="inferred from homology"/>
<sequence>MVSTHNRDKPWDTDDIDKWKIEEFKEEDNASGQPFAEESSFMTLFPKYRESYLKTIWNDVTRALDKHNIACVLDLVEGSMTVKTTRKTYDPAIILKARDLIKLLARSVPFPQAVKILQDDMACDVIKIGNFVTNKERFVKRRQRLVGPNGNTLKALELLTKCYILVQGNTVSAMGPFKGLKEVRRVVEDCMKNIHPIYHIKELMIKRELAKRPELANEDWSRFLPMFKKRNVARKKPKKIRNVEKKVYTPFPPAQLPRKVDLEIESGEYFLSKREKQMKKLNEQKEKQMEREIERQEERAKDFIAPEEEAYKPNQN</sequence>
<gene>
    <name evidence="1" type="primary">KRR1</name>
    <name type="ORF">AWRI1631_30100</name>
</gene>
<feature type="chain" id="PRO_0000415660" description="KRR1 small subunit processome component">
    <location>
        <begin position="1"/>
        <end position="316"/>
    </location>
</feature>
<feature type="domain" description="KH" evidence="2">
    <location>
        <begin position="122"/>
        <end position="192"/>
    </location>
</feature>
<feature type="region of interest" description="Disordered" evidence="3">
    <location>
        <begin position="279"/>
        <end position="316"/>
    </location>
</feature>
<feature type="compositionally biased region" description="Basic and acidic residues" evidence="3">
    <location>
        <begin position="279"/>
        <end position="304"/>
    </location>
</feature>
<keyword id="KW-0539">Nucleus</keyword>
<keyword id="KW-0687">Ribonucleoprotein</keyword>
<keyword id="KW-0690">Ribosome biogenesis</keyword>
<keyword id="KW-0694">RNA-binding</keyword>
<keyword id="KW-0698">rRNA processing</keyword>
<dbReference type="EMBL" id="ABSV01000211">
    <property type="protein sequence ID" value="EDZ73592.1"/>
    <property type="molecule type" value="Genomic_DNA"/>
</dbReference>
<dbReference type="SMR" id="B5VEQ2"/>
<dbReference type="Proteomes" id="UP000008988">
    <property type="component" value="Unassembled WGS sequence"/>
</dbReference>
<dbReference type="GO" id="GO:0005730">
    <property type="term" value="C:nucleolus"/>
    <property type="evidence" value="ECO:0007669"/>
    <property type="project" value="UniProtKB-SubCell"/>
</dbReference>
<dbReference type="GO" id="GO:0032040">
    <property type="term" value="C:small-subunit processome"/>
    <property type="evidence" value="ECO:0007669"/>
    <property type="project" value="TreeGrafter"/>
</dbReference>
<dbReference type="GO" id="GO:0003723">
    <property type="term" value="F:RNA binding"/>
    <property type="evidence" value="ECO:0007669"/>
    <property type="project" value="UniProtKB-KW"/>
</dbReference>
<dbReference type="GO" id="GO:0006364">
    <property type="term" value="P:rRNA processing"/>
    <property type="evidence" value="ECO:0007669"/>
    <property type="project" value="UniProtKB-KW"/>
</dbReference>
<dbReference type="CDD" id="cd22393">
    <property type="entry name" value="KH-I_KRR1_rpt1"/>
    <property type="match status" value="1"/>
</dbReference>
<dbReference type="CDD" id="cd22394">
    <property type="entry name" value="KH-I_KRR1_rpt2"/>
    <property type="match status" value="1"/>
</dbReference>
<dbReference type="FunFam" id="3.30.1370.10:FF:000011">
    <property type="entry name" value="KRR1 small subunit processome component"/>
    <property type="match status" value="1"/>
</dbReference>
<dbReference type="FunFam" id="3.30.1370.10:FF:000014">
    <property type="entry name" value="KRR1 small subunit processome component"/>
    <property type="match status" value="1"/>
</dbReference>
<dbReference type="Gene3D" id="3.30.1370.10">
    <property type="entry name" value="K Homology domain, type 1"/>
    <property type="match status" value="2"/>
</dbReference>
<dbReference type="InterPro" id="IPR004087">
    <property type="entry name" value="KH_dom"/>
</dbReference>
<dbReference type="InterPro" id="IPR036612">
    <property type="entry name" value="KH_dom_type_1_sf"/>
</dbReference>
<dbReference type="InterPro" id="IPR041174">
    <property type="entry name" value="KRR1-like_KH1"/>
</dbReference>
<dbReference type="InterPro" id="IPR048550">
    <property type="entry name" value="KRR1-like_KH1_euk"/>
</dbReference>
<dbReference type="InterPro" id="IPR048548">
    <property type="entry name" value="KRR1-like_KH2"/>
</dbReference>
<dbReference type="InterPro" id="IPR048549">
    <property type="entry name" value="KRR1-like_KH2_euk"/>
</dbReference>
<dbReference type="InterPro" id="IPR024166">
    <property type="entry name" value="rRNA_assembly_KRR1"/>
</dbReference>
<dbReference type="PANTHER" id="PTHR12581">
    <property type="entry name" value="HIV-1 REV BINDING PROTEIN 2, 3"/>
    <property type="match status" value="1"/>
</dbReference>
<dbReference type="PANTHER" id="PTHR12581:SF0">
    <property type="entry name" value="KRR1 SMALL SUBUNIT PROCESSOME COMPONENT HOMOLOG"/>
    <property type="match status" value="1"/>
</dbReference>
<dbReference type="Pfam" id="PF17903">
    <property type="entry name" value="KH_KRR1_1st"/>
    <property type="match status" value="1"/>
</dbReference>
<dbReference type="Pfam" id="PF21800">
    <property type="entry name" value="KH_KRR1_2nd"/>
    <property type="match status" value="1"/>
</dbReference>
<dbReference type="PIRSF" id="PIRSF006515">
    <property type="entry name" value="KRR1"/>
    <property type="match status" value="1"/>
</dbReference>
<dbReference type="SMART" id="SM00322">
    <property type="entry name" value="KH"/>
    <property type="match status" value="1"/>
</dbReference>
<dbReference type="SUPFAM" id="SSF54791">
    <property type="entry name" value="Eukaryotic type KH-domain (KH-domain type I)"/>
    <property type="match status" value="1"/>
</dbReference>
<accession>B5VEQ2</accession>
<reference evidence="4" key="1">
    <citation type="journal article" date="2008" name="FEMS Yeast Res.">
        <title>Comparative genome analysis of a Saccharomyces cerevisiae wine strain.</title>
        <authorList>
            <person name="Borneman A.R."/>
            <person name="Forgan A.H."/>
            <person name="Pretorius I.S."/>
            <person name="Chambers P.J."/>
        </authorList>
    </citation>
    <scope>NUCLEOTIDE SEQUENCE [LARGE SCALE GENOMIC DNA]</scope>
    <source>
        <strain evidence="4">AWRI1631</strain>
    </source>
</reference>
<protein>
    <recommendedName>
        <fullName evidence="1">KRR1 small subunit processome component</fullName>
    </recommendedName>
    <alternativeName>
        <fullName evidence="1">KRR-R motif-containing protein 1</fullName>
    </alternativeName>
    <alternativeName>
        <fullName evidence="1">Ribosomal RNA assembly protein KRR1</fullName>
    </alternativeName>
</protein>
<comment type="function">
    <text evidence="1">Required for 40S ribosome biogenesis. Involved in nucleolar processing of pre-18S ribosomal RNA and ribosome assembly. Essential for vegetative growth (By similarity).</text>
</comment>
<comment type="subunit">
    <text evidence="1">Component of the ribosomal small subunit (SSU) processome composed of at least 40 protein subunits and snoRNA U3. Interacts with snoRNA U3. Interacts with MPP10, KRI1 and with ribosomal proteins RPS1A, RPS4A, RPS4B, RPS8A, RPS8B, RPS11A, RPS11B, RPS13, RPS24, RPS25, RPL4A, RPL7B, RPL8, RPL23, RPL25 and RPL28 (By similarity).</text>
</comment>
<comment type="subcellular location">
    <subcellularLocation>
        <location evidence="1">Nucleus</location>
        <location evidence="1">Nucleolus</location>
    </subcellularLocation>
</comment>
<comment type="similarity">
    <text evidence="2">Belongs to the KRR1 family.</text>
</comment>